<accession>P23901</accession>
<proteinExistence type="evidence at protein level"/>
<keyword id="KW-0002">3D-structure</keyword>
<keyword id="KW-0521">NADP</keyword>
<keyword id="KW-0560">Oxidoreductase</keyword>
<keyword id="KW-0346">Stress response</keyword>
<dbReference type="EC" id="1.1.1.21"/>
<dbReference type="EMBL" id="X57526">
    <property type="protein sequence ID" value="CAA40747.1"/>
    <property type="molecule type" value="Genomic_DNA"/>
</dbReference>
<dbReference type="PIR" id="S15024">
    <property type="entry name" value="S15024"/>
</dbReference>
<dbReference type="PDB" id="2BGQ">
    <property type="method" value="X-ray"/>
    <property type="resolution" value="2.50 A"/>
    <property type="chains" value="A=2-320"/>
</dbReference>
<dbReference type="PDB" id="2BGS">
    <property type="method" value="X-ray"/>
    <property type="resolution" value="1.64 A"/>
    <property type="chains" value="A=2-320"/>
</dbReference>
<dbReference type="PDB" id="2VDG">
    <property type="method" value="X-ray"/>
    <property type="resolution" value="1.92 A"/>
    <property type="chains" value="A=2-320"/>
</dbReference>
<dbReference type="PDBsum" id="2BGQ"/>
<dbReference type="PDBsum" id="2BGS"/>
<dbReference type="PDBsum" id="2VDG"/>
<dbReference type="SMR" id="P23901"/>
<dbReference type="EvolutionaryTrace" id="P23901"/>
<dbReference type="ExpressionAtlas" id="P23901">
    <property type="expression patterns" value="baseline and differential"/>
</dbReference>
<dbReference type="GO" id="GO:0004032">
    <property type="term" value="F:aldose reductase (NADPH) activity"/>
    <property type="evidence" value="ECO:0007669"/>
    <property type="project" value="RHEA"/>
</dbReference>
<dbReference type="CDD" id="cd19125">
    <property type="entry name" value="AKR_AKR4C1-15"/>
    <property type="match status" value="1"/>
</dbReference>
<dbReference type="FunFam" id="3.20.20.100:FF:000013">
    <property type="entry name" value="NADPH-dependent codeinone reductase 1-1"/>
    <property type="match status" value="1"/>
</dbReference>
<dbReference type="Gene3D" id="3.20.20.100">
    <property type="entry name" value="NADP-dependent oxidoreductase domain"/>
    <property type="match status" value="1"/>
</dbReference>
<dbReference type="InterPro" id="IPR020471">
    <property type="entry name" value="AKR"/>
</dbReference>
<dbReference type="InterPro" id="IPR044498">
    <property type="entry name" value="AKR4C"/>
</dbReference>
<dbReference type="InterPro" id="IPR018170">
    <property type="entry name" value="Aldo/ket_reductase_CS"/>
</dbReference>
<dbReference type="InterPro" id="IPR023210">
    <property type="entry name" value="NADP_OxRdtase_dom"/>
</dbReference>
<dbReference type="InterPro" id="IPR036812">
    <property type="entry name" value="NADP_OxRdtase_dom_sf"/>
</dbReference>
<dbReference type="PANTHER" id="PTHR11732">
    <property type="entry name" value="ALDO/KETO REDUCTASE"/>
    <property type="match status" value="1"/>
</dbReference>
<dbReference type="Pfam" id="PF00248">
    <property type="entry name" value="Aldo_ket_red"/>
    <property type="match status" value="1"/>
</dbReference>
<dbReference type="PIRSF" id="PIRSF000097">
    <property type="entry name" value="AKR"/>
    <property type="match status" value="1"/>
</dbReference>
<dbReference type="PRINTS" id="PR00069">
    <property type="entry name" value="ALDKETRDTASE"/>
</dbReference>
<dbReference type="SUPFAM" id="SSF51430">
    <property type="entry name" value="NAD(P)-linked oxidoreductase"/>
    <property type="match status" value="1"/>
</dbReference>
<dbReference type="PROSITE" id="PS00798">
    <property type="entry name" value="ALDOKETO_REDUCTASE_1"/>
    <property type="match status" value="1"/>
</dbReference>
<dbReference type="PROSITE" id="PS00062">
    <property type="entry name" value="ALDOKETO_REDUCTASE_2"/>
    <property type="match status" value="1"/>
</dbReference>
<dbReference type="PROSITE" id="PS00063">
    <property type="entry name" value="ALDOKETO_REDUCTASE_3"/>
    <property type="match status" value="1"/>
</dbReference>
<name>ALDR_HORVU</name>
<reference key="1">
    <citation type="journal article" date="1991" name="EMBO J.">
        <title>An ABA and GA modulated gene expressed in the barley embryo encodes an aldose reductase related protein.</title>
        <authorList>
            <person name="Bartels D."/>
            <person name="Engelhardt K."/>
            <person name="Roncarati R."/>
            <person name="Schneider K."/>
            <person name="Rotter M."/>
            <person name="Salamini F."/>
        </authorList>
    </citation>
    <scope>NUCLEOTIDE SEQUENCE [GENOMIC DNA]</scope>
    <source>
        <strain>cv. Aura</strain>
    </source>
</reference>
<reference key="2">
    <citation type="journal article" date="2008" name="Proteins">
        <title>Barley aldose reductase: structure, cofactor binding, and substrate recognition in the aldo/keto reductase 4C family.</title>
        <authorList>
            <person name="Olsen J.G."/>
            <person name="Pedersen L."/>
            <person name="Christensen C.L."/>
            <person name="Olsen O."/>
            <person name="Henriksen A."/>
        </authorList>
    </citation>
    <scope>X-RAY CRYSTALLOGRAPHY (1.64 ANGSTROMS) OF 2-320</scope>
</reference>
<organism>
    <name type="scientific">Hordeum vulgare</name>
    <name type="common">Barley</name>
    <dbReference type="NCBI Taxonomy" id="4513"/>
    <lineage>
        <taxon>Eukaryota</taxon>
        <taxon>Viridiplantae</taxon>
        <taxon>Streptophyta</taxon>
        <taxon>Embryophyta</taxon>
        <taxon>Tracheophyta</taxon>
        <taxon>Spermatophyta</taxon>
        <taxon>Magnoliopsida</taxon>
        <taxon>Liliopsida</taxon>
        <taxon>Poales</taxon>
        <taxon>Poaceae</taxon>
        <taxon>BOP clade</taxon>
        <taxon>Pooideae</taxon>
        <taxon>Triticodae</taxon>
        <taxon>Triticeae</taxon>
        <taxon>Hordeinae</taxon>
        <taxon>Hordeum</taxon>
    </lineage>
</organism>
<evidence type="ECO:0000250" key="1"/>
<evidence type="ECO:0000305" key="2"/>
<evidence type="ECO:0007829" key="3">
    <source>
        <dbReference type="PDB" id="2BGQ"/>
    </source>
</evidence>
<evidence type="ECO:0007829" key="4">
    <source>
        <dbReference type="PDB" id="2BGS"/>
    </source>
</evidence>
<comment type="catalytic activity">
    <reaction>
        <text>an alditol + NAD(+) = an aldose + NADH + H(+)</text>
        <dbReference type="Rhea" id="RHEA:12785"/>
        <dbReference type="Rhea" id="RHEA-COMP:9554"/>
        <dbReference type="Rhea" id="RHEA-COMP:9555"/>
        <dbReference type="ChEBI" id="CHEBI:15378"/>
        <dbReference type="ChEBI" id="CHEBI:15693"/>
        <dbReference type="ChEBI" id="CHEBI:17522"/>
        <dbReference type="ChEBI" id="CHEBI:57540"/>
        <dbReference type="ChEBI" id="CHEBI:57945"/>
        <dbReference type="EC" id="1.1.1.21"/>
    </reaction>
</comment>
<comment type="catalytic activity">
    <reaction>
        <text>an alditol + NADP(+) = an aldose + NADPH + H(+)</text>
        <dbReference type="Rhea" id="RHEA:12789"/>
        <dbReference type="Rhea" id="RHEA-COMP:9554"/>
        <dbReference type="Rhea" id="RHEA-COMP:9555"/>
        <dbReference type="ChEBI" id="CHEBI:15378"/>
        <dbReference type="ChEBI" id="CHEBI:15693"/>
        <dbReference type="ChEBI" id="CHEBI:17522"/>
        <dbReference type="ChEBI" id="CHEBI:57783"/>
        <dbReference type="ChEBI" id="CHEBI:58349"/>
        <dbReference type="EC" id="1.1.1.21"/>
    </reaction>
</comment>
<comment type="induction">
    <text>By abscisic acid (ABA) and gibberellic acid (GA).</text>
</comment>
<comment type="similarity">
    <text evidence="2">Belongs to the aldo/keto reductase family.</text>
</comment>
<sequence>MASAKATMGQGEQDHFVLKSGHAMPAVGLGTWRAGSDTAHSVRTAITEAGYRHVDTAAEYGVEKEVGKGLKAAMEAGIDRKDLFVTSKIWCTNLAPERVRPALENTLKDLQLDYIDLYHIHWPFRLKDGAHMPPEAGEVLEFDMEGVWKEMENLVKDGLVKDIGVCNYTVTKLNRLLRSAKIPPAVCQMEMHPGWKNDKIFEACKKHGIHVTAYSPLGSSEKNLAHDPVVEKVANKLNKTPGQVLIKWALQRGTSVIPKSSKDERIKENIQVFGWEIPEEDFKVLCSIKDEKRVLTGEELFVNKTHGPYRSAADVWDHEN</sequence>
<protein>
    <recommendedName>
        <fullName>Aldose reductase</fullName>
        <shortName>AR</shortName>
        <ecNumber>1.1.1.21</ecNumber>
    </recommendedName>
    <alternativeName>
        <fullName>Aldehyde reductase</fullName>
    </alternativeName>
</protein>
<feature type="chain" id="PRO_0000124628" description="Aldose reductase">
    <location>
        <begin position="1"/>
        <end position="320"/>
    </location>
</feature>
<feature type="active site" description="Proton donor" evidence="1">
    <location>
        <position position="60"/>
    </location>
</feature>
<feature type="binding site" evidence="1">
    <location>
        <position position="121"/>
    </location>
    <ligand>
        <name>substrate</name>
    </ligand>
</feature>
<feature type="binding site" evidence="1">
    <location>
        <begin position="215"/>
        <end position="269"/>
    </location>
    <ligand>
        <name>NADP(+)</name>
        <dbReference type="ChEBI" id="CHEBI:58349"/>
    </ligand>
</feature>
<feature type="site" description="Lowers pKa of active site Tyr" evidence="1">
    <location>
        <position position="88"/>
    </location>
</feature>
<feature type="strand" evidence="4">
    <location>
        <begin position="15"/>
        <end position="17"/>
    </location>
</feature>
<feature type="strand" evidence="4">
    <location>
        <begin position="23"/>
        <end position="27"/>
    </location>
</feature>
<feature type="helix" evidence="4">
    <location>
        <begin position="35"/>
        <end position="37"/>
    </location>
</feature>
<feature type="helix" evidence="4">
    <location>
        <begin position="38"/>
        <end position="47"/>
    </location>
</feature>
<feature type="strand" evidence="4">
    <location>
        <begin position="53"/>
        <end position="55"/>
    </location>
</feature>
<feature type="helix" evidence="4">
    <location>
        <begin position="58"/>
        <end position="60"/>
    </location>
</feature>
<feature type="helix" evidence="4">
    <location>
        <begin position="63"/>
        <end position="75"/>
    </location>
</feature>
<feature type="helix" evidence="4">
    <location>
        <begin position="80"/>
        <end position="82"/>
    </location>
</feature>
<feature type="strand" evidence="4">
    <location>
        <begin position="84"/>
        <end position="89"/>
    </location>
</feature>
<feature type="helix" evidence="4">
    <location>
        <begin position="91"/>
        <end position="93"/>
    </location>
</feature>
<feature type="helix" evidence="4">
    <location>
        <begin position="96"/>
        <end position="98"/>
    </location>
</feature>
<feature type="helix" evidence="4">
    <location>
        <begin position="99"/>
        <end position="110"/>
    </location>
</feature>
<feature type="strand" evidence="4">
    <location>
        <begin position="115"/>
        <end position="123"/>
    </location>
</feature>
<feature type="helix" evidence="4">
    <location>
        <begin position="144"/>
        <end position="156"/>
    </location>
</feature>
<feature type="strand" evidence="4">
    <location>
        <begin position="159"/>
        <end position="167"/>
    </location>
</feature>
<feature type="helix" evidence="4">
    <location>
        <begin position="170"/>
        <end position="179"/>
    </location>
</feature>
<feature type="strand" evidence="4">
    <location>
        <begin position="185"/>
        <end position="190"/>
    </location>
</feature>
<feature type="helix" evidence="4">
    <location>
        <begin position="198"/>
        <end position="206"/>
    </location>
</feature>
<feature type="strand" evidence="4">
    <location>
        <begin position="210"/>
        <end position="215"/>
    </location>
</feature>
<feature type="turn" evidence="4">
    <location>
        <begin position="219"/>
        <end position="222"/>
    </location>
</feature>
<feature type="helix" evidence="3">
    <location>
        <begin position="224"/>
        <end position="226"/>
    </location>
</feature>
<feature type="helix" evidence="4">
    <location>
        <begin position="228"/>
        <end position="237"/>
    </location>
</feature>
<feature type="helix" evidence="4">
    <location>
        <begin position="241"/>
        <end position="252"/>
    </location>
</feature>
<feature type="strand" evidence="3">
    <location>
        <begin position="255"/>
        <end position="257"/>
    </location>
</feature>
<feature type="helix" evidence="4">
    <location>
        <begin position="263"/>
        <end position="268"/>
    </location>
</feature>
<feature type="helix" evidence="4">
    <location>
        <begin position="279"/>
        <end position="287"/>
    </location>
</feature>
<feature type="helix" evidence="4">
    <location>
        <begin position="298"/>
        <end position="301"/>
    </location>
</feature>
<feature type="turn" evidence="4">
    <location>
        <begin position="304"/>
        <end position="306"/>
    </location>
</feature>
<feature type="helix" evidence="4">
    <location>
        <begin position="312"/>
        <end position="315"/>
    </location>
</feature>
<feature type="turn" evidence="4">
    <location>
        <begin position="316"/>
        <end position="318"/>
    </location>
</feature>